<evidence type="ECO:0000255" key="1">
    <source>
        <dbReference type="HAMAP-Rule" id="MF_01218"/>
    </source>
</evidence>
<gene>
    <name evidence="1" type="primary">upp</name>
    <name type="ordered locus">R00131</name>
    <name type="ORF">SMc04121</name>
</gene>
<keyword id="KW-0021">Allosteric enzyme</keyword>
<keyword id="KW-0328">Glycosyltransferase</keyword>
<keyword id="KW-0342">GTP-binding</keyword>
<keyword id="KW-0460">Magnesium</keyword>
<keyword id="KW-0547">Nucleotide-binding</keyword>
<keyword id="KW-1185">Reference proteome</keyword>
<keyword id="KW-0808">Transferase</keyword>
<organism>
    <name type="scientific">Rhizobium meliloti (strain 1021)</name>
    <name type="common">Ensifer meliloti</name>
    <name type="synonym">Sinorhizobium meliloti</name>
    <dbReference type="NCBI Taxonomy" id="266834"/>
    <lineage>
        <taxon>Bacteria</taxon>
        <taxon>Pseudomonadati</taxon>
        <taxon>Pseudomonadota</taxon>
        <taxon>Alphaproteobacteria</taxon>
        <taxon>Hyphomicrobiales</taxon>
        <taxon>Rhizobiaceae</taxon>
        <taxon>Sinorhizobium/Ensifer group</taxon>
        <taxon>Sinorhizobium</taxon>
    </lineage>
</organism>
<name>UPP_RHIME</name>
<comment type="function">
    <text evidence="1">Catalyzes the conversion of uracil and 5-phospho-alpha-D-ribose 1-diphosphate (PRPP) to UMP and diphosphate.</text>
</comment>
<comment type="catalytic activity">
    <reaction evidence="1">
        <text>UMP + diphosphate = 5-phospho-alpha-D-ribose 1-diphosphate + uracil</text>
        <dbReference type="Rhea" id="RHEA:13017"/>
        <dbReference type="ChEBI" id="CHEBI:17568"/>
        <dbReference type="ChEBI" id="CHEBI:33019"/>
        <dbReference type="ChEBI" id="CHEBI:57865"/>
        <dbReference type="ChEBI" id="CHEBI:58017"/>
        <dbReference type="EC" id="2.4.2.9"/>
    </reaction>
</comment>
<comment type="cofactor">
    <cofactor evidence="1">
        <name>Mg(2+)</name>
        <dbReference type="ChEBI" id="CHEBI:18420"/>
    </cofactor>
    <text evidence="1">Binds 1 Mg(2+) ion per subunit. The magnesium is bound as Mg-PRPP.</text>
</comment>
<comment type="activity regulation">
    <text evidence="1">Allosterically activated by GTP.</text>
</comment>
<comment type="pathway">
    <text evidence="1">Pyrimidine metabolism; UMP biosynthesis via salvage pathway; UMP from uracil: step 1/1.</text>
</comment>
<comment type="similarity">
    <text evidence="1">Belongs to the UPRTase family.</text>
</comment>
<proteinExistence type="inferred from homology"/>
<accession>Q92T49</accession>
<sequence>MDGVTVIGHPLVQHKLTIMRKKETSTAGFRRLLKEISTLLCYEVTRDLELTTERIETPLVETDAPVLEGKKLVFASILRAGNGLLEGMLELVPSARVAHIGVYRDHETLQAVEYFFKAPDNINERLVIVVDPMLATGNSAIAAIEKLKERGARNIRFLCLLAAPEGIRNFQGAHPDVPIFTASIDSHLNEKGYIVPGLGDAGDRMYGTK</sequence>
<protein>
    <recommendedName>
        <fullName evidence="1">Uracil phosphoribosyltransferase</fullName>
        <ecNumber evidence="1">2.4.2.9</ecNumber>
    </recommendedName>
    <alternativeName>
        <fullName evidence="1">UMP pyrophosphorylase</fullName>
    </alternativeName>
    <alternativeName>
        <fullName evidence="1">UPRTase</fullName>
    </alternativeName>
</protein>
<reference key="1">
    <citation type="journal article" date="2001" name="Proc. Natl. Acad. Sci. U.S.A.">
        <title>Analysis of the chromosome sequence of the legume symbiont Sinorhizobium meliloti strain 1021.</title>
        <authorList>
            <person name="Capela D."/>
            <person name="Barloy-Hubler F."/>
            <person name="Gouzy J."/>
            <person name="Bothe G."/>
            <person name="Ampe F."/>
            <person name="Batut J."/>
            <person name="Boistard P."/>
            <person name="Becker A."/>
            <person name="Boutry M."/>
            <person name="Cadieu E."/>
            <person name="Dreano S."/>
            <person name="Gloux S."/>
            <person name="Godrie T."/>
            <person name="Goffeau A."/>
            <person name="Kahn D."/>
            <person name="Kiss E."/>
            <person name="Lelaure V."/>
            <person name="Masuy D."/>
            <person name="Pohl T."/>
            <person name="Portetelle D."/>
            <person name="Puehler A."/>
            <person name="Purnelle B."/>
            <person name="Ramsperger U."/>
            <person name="Renard C."/>
            <person name="Thebault P."/>
            <person name="Vandenbol M."/>
            <person name="Weidner S."/>
            <person name="Galibert F."/>
        </authorList>
    </citation>
    <scope>NUCLEOTIDE SEQUENCE [LARGE SCALE GENOMIC DNA]</scope>
    <source>
        <strain>1021</strain>
    </source>
</reference>
<reference key="2">
    <citation type="journal article" date="2001" name="Science">
        <title>The composite genome of the legume symbiont Sinorhizobium meliloti.</title>
        <authorList>
            <person name="Galibert F."/>
            <person name="Finan T.M."/>
            <person name="Long S.R."/>
            <person name="Puehler A."/>
            <person name="Abola P."/>
            <person name="Ampe F."/>
            <person name="Barloy-Hubler F."/>
            <person name="Barnett M.J."/>
            <person name="Becker A."/>
            <person name="Boistard P."/>
            <person name="Bothe G."/>
            <person name="Boutry M."/>
            <person name="Bowser L."/>
            <person name="Buhrmester J."/>
            <person name="Cadieu E."/>
            <person name="Capela D."/>
            <person name="Chain P."/>
            <person name="Cowie A."/>
            <person name="Davis R.W."/>
            <person name="Dreano S."/>
            <person name="Federspiel N.A."/>
            <person name="Fisher R.F."/>
            <person name="Gloux S."/>
            <person name="Godrie T."/>
            <person name="Goffeau A."/>
            <person name="Golding B."/>
            <person name="Gouzy J."/>
            <person name="Gurjal M."/>
            <person name="Hernandez-Lucas I."/>
            <person name="Hong A."/>
            <person name="Huizar L."/>
            <person name="Hyman R.W."/>
            <person name="Jones T."/>
            <person name="Kahn D."/>
            <person name="Kahn M.L."/>
            <person name="Kalman S."/>
            <person name="Keating D.H."/>
            <person name="Kiss E."/>
            <person name="Komp C."/>
            <person name="Lelaure V."/>
            <person name="Masuy D."/>
            <person name="Palm C."/>
            <person name="Peck M.C."/>
            <person name="Pohl T.M."/>
            <person name="Portetelle D."/>
            <person name="Purnelle B."/>
            <person name="Ramsperger U."/>
            <person name="Surzycki R."/>
            <person name="Thebault P."/>
            <person name="Vandenbol M."/>
            <person name="Vorhoelter F.J."/>
            <person name="Weidner S."/>
            <person name="Wells D.H."/>
            <person name="Wong K."/>
            <person name="Yeh K.-C."/>
            <person name="Batut J."/>
        </authorList>
    </citation>
    <scope>NUCLEOTIDE SEQUENCE [LARGE SCALE GENOMIC DNA]</scope>
    <source>
        <strain>1021</strain>
    </source>
</reference>
<feature type="chain" id="PRO_0000120874" description="Uracil phosphoribosyltransferase">
    <location>
        <begin position="1"/>
        <end position="209"/>
    </location>
</feature>
<feature type="binding site" evidence="1">
    <location>
        <position position="79"/>
    </location>
    <ligand>
        <name>5-phospho-alpha-D-ribose 1-diphosphate</name>
        <dbReference type="ChEBI" id="CHEBI:58017"/>
    </ligand>
</feature>
<feature type="binding site" evidence="1">
    <location>
        <position position="104"/>
    </location>
    <ligand>
        <name>5-phospho-alpha-D-ribose 1-diphosphate</name>
        <dbReference type="ChEBI" id="CHEBI:58017"/>
    </ligand>
</feature>
<feature type="binding site" evidence="1">
    <location>
        <begin position="131"/>
        <end position="139"/>
    </location>
    <ligand>
        <name>5-phospho-alpha-D-ribose 1-diphosphate</name>
        <dbReference type="ChEBI" id="CHEBI:58017"/>
    </ligand>
</feature>
<feature type="binding site" evidence="1">
    <location>
        <position position="194"/>
    </location>
    <ligand>
        <name>uracil</name>
        <dbReference type="ChEBI" id="CHEBI:17568"/>
    </ligand>
</feature>
<feature type="binding site" evidence="1">
    <location>
        <begin position="199"/>
        <end position="201"/>
    </location>
    <ligand>
        <name>uracil</name>
        <dbReference type="ChEBI" id="CHEBI:17568"/>
    </ligand>
</feature>
<feature type="binding site" evidence="1">
    <location>
        <position position="200"/>
    </location>
    <ligand>
        <name>5-phospho-alpha-D-ribose 1-diphosphate</name>
        <dbReference type="ChEBI" id="CHEBI:58017"/>
    </ligand>
</feature>
<dbReference type="EC" id="2.4.2.9" evidence="1"/>
<dbReference type="EMBL" id="AL591688">
    <property type="protein sequence ID" value="CAC41518.1"/>
    <property type="molecule type" value="Genomic_DNA"/>
</dbReference>
<dbReference type="RefSeq" id="NP_384237.1">
    <property type="nucleotide sequence ID" value="NC_003047.1"/>
</dbReference>
<dbReference type="RefSeq" id="WP_003536149.1">
    <property type="nucleotide sequence ID" value="NC_003047.1"/>
</dbReference>
<dbReference type="SMR" id="Q92T49"/>
<dbReference type="EnsemblBacteria" id="CAC41518">
    <property type="protein sequence ID" value="CAC41518"/>
    <property type="gene ID" value="SMc04121"/>
</dbReference>
<dbReference type="GeneID" id="89574456"/>
<dbReference type="KEGG" id="sme:SMc04121"/>
<dbReference type="PATRIC" id="fig|266834.11.peg.1490"/>
<dbReference type="eggNOG" id="COG0035">
    <property type="taxonomic scope" value="Bacteria"/>
</dbReference>
<dbReference type="HOGENOM" id="CLU_067096_2_2_5"/>
<dbReference type="OrthoDB" id="9781675at2"/>
<dbReference type="UniPathway" id="UPA00574">
    <property type="reaction ID" value="UER00636"/>
</dbReference>
<dbReference type="Proteomes" id="UP000001976">
    <property type="component" value="Chromosome"/>
</dbReference>
<dbReference type="GO" id="GO:0005525">
    <property type="term" value="F:GTP binding"/>
    <property type="evidence" value="ECO:0007669"/>
    <property type="project" value="UniProtKB-KW"/>
</dbReference>
<dbReference type="GO" id="GO:0000287">
    <property type="term" value="F:magnesium ion binding"/>
    <property type="evidence" value="ECO:0007669"/>
    <property type="project" value="UniProtKB-UniRule"/>
</dbReference>
<dbReference type="GO" id="GO:0004845">
    <property type="term" value="F:uracil phosphoribosyltransferase activity"/>
    <property type="evidence" value="ECO:0007669"/>
    <property type="project" value="UniProtKB-UniRule"/>
</dbReference>
<dbReference type="GO" id="GO:0044206">
    <property type="term" value="P:UMP salvage"/>
    <property type="evidence" value="ECO:0007669"/>
    <property type="project" value="UniProtKB-UniRule"/>
</dbReference>
<dbReference type="GO" id="GO:0006223">
    <property type="term" value="P:uracil salvage"/>
    <property type="evidence" value="ECO:0007669"/>
    <property type="project" value="InterPro"/>
</dbReference>
<dbReference type="CDD" id="cd06223">
    <property type="entry name" value="PRTases_typeI"/>
    <property type="match status" value="1"/>
</dbReference>
<dbReference type="FunFam" id="3.40.50.2020:FF:000003">
    <property type="entry name" value="Uracil phosphoribosyltransferase"/>
    <property type="match status" value="1"/>
</dbReference>
<dbReference type="Gene3D" id="3.40.50.2020">
    <property type="match status" value="1"/>
</dbReference>
<dbReference type="HAMAP" id="MF_01218_B">
    <property type="entry name" value="Upp_B"/>
    <property type="match status" value="1"/>
</dbReference>
<dbReference type="InterPro" id="IPR000836">
    <property type="entry name" value="PRibTrfase_dom"/>
</dbReference>
<dbReference type="InterPro" id="IPR029057">
    <property type="entry name" value="PRTase-like"/>
</dbReference>
<dbReference type="InterPro" id="IPR034332">
    <property type="entry name" value="Upp_B"/>
</dbReference>
<dbReference type="InterPro" id="IPR050054">
    <property type="entry name" value="UPRTase/APRTase"/>
</dbReference>
<dbReference type="InterPro" id="IPR005765">
    <property type="entry name" value="Ura_phspho_trans"/>
</dbReference>
<dbReference type="NCBIfam" id="NF001097">
    <property type="entry name" value="PRK00129.1"/>
    <property type="match status" value="1"/>
</dbReference>
<dbReference type="NCBIfam" id="TIGR01091">
    <property type="entry name" value="upp"/>
    <property type="match status" value="1"/>
</dbReference>
<dbReference type="PANTHER" id="PTHR32315">
    <property type="entry name" value="ADENINE PHOSPHORIBOSYLTRANSFERASE"/>
    <property type="match status" value="1"/>
</dbReference>
<dbReference type="PANTHER" id="PTHR32315:SF4">
    <property type="entry name" value="URACIL PHOSPHORIBOSYLTRANSFERASE, CHLOROPLASTIC"/>
    <property type="match status" value="1"/>
</dbReference>
<dbReference type="Pfam" id="PF14681">
    <property type="entry name" value="UPRTase"/>
    <property type="match status" value="1"/>
</dbReference>
<dbReference type="SUPFAM" id="SSF53271">
    <property type="entry name" value="PRTase-like"/>
    <property type="match status" value="1"/>
</dbReference>